<accession>Q40189</accession>
<gene>
    <name type="primary">M6</name>
</gene>
<proteinExistence type="evidence at transcript level"/>
<organism>
    <name type="scientific">Lilium henryi</name>
    <name type="common">Henry's lily</name>
    <dbReference type="NCBI Taxonomy" id="4689"/>
    <lineage>
        <taxon>Eukaryota</taxon>
        <taxon>Viridiplantae</taxon>
        <taxon>Streptophyta</taxon>
        <taxon>Embryophyta</taxon>
        <taxon>Tracheophyta</taxon>
        <taxon>Spermatophyta</taxon>
        <taxon>Magnoliopsida</taxon>
        <taxon>Liliopsida</taxon>
        <taxon>Liliales</taxon>
        <taxon>Liliaceae</taxon>
        <taxon>Lilium</taxon>
    </lineage>
</organism>
<dbReference type="EMBL" id="X80718">
    <property type="protein sequence ID" value="CAA56723.1"/>
    <property type="molecule type" value="mRNA"/>
</dbReference>
<dbReference type="SMR" id="Q40189"/>
<dbReference type="GO" id="GO:0005576">
    <property type="term" value="C:extracellular region"/>
    <property type="evidence" value="ECO:0007669"/>
    <property type="project" value="UniProtKB-SubCell"/>
</dbReference>
<dbReference type="Gene3D" id="1.10.110.10">
    <property type="entry name" value="Plant lipid-transfer and hydrophobic proteins"/>
    <property type="match status" value="1"/>
</dbReference>
<dbReference type="InterPro" id="IPR036312">
    <property type="entry name" value="Bifun_inhib/LTP/seed_sf"/>
</dbReference>
<dbReference type="InterPro" id="IPR016140">
    <property type="entry name" value="Bifunc_inhib/LTP/seed_store"/>
</dbReference>
<dbReference type="PANTHER" id="PTHR35501">
    <property type="entry name" value="PROTEIN YY1"/>
    <property type="match status" value="1"/>
</dbReference>
<dbReference type="PANTHER" id="PTHR35501:SF3">
    <property type="entry name" value="PROTEIN YY1"/>
    <property type="match status" value="1"/>
</dbReference>
<dbReference type="Pfam" id="PF00234">
    <property type="entry name" value="Tryp_alpha_amyl"/>
    <property type="match status" value="1"/>
</dbReference>
<dbReference type="SUPFAM" id="SSF47699">
    <property type="entry name" value="Bifunctional inhibitor/lipid-transfer protein/seed storage 2S albumin"/>
    <property type="match status" value="1"/>
</dbReference>
<keyword id="KW-0964">Secreted</keyword>
<reference key="1">
    <citation type="journal article" date="1995" name="Planta">
        <title>The characterisation of tapetum-specific cDNAs isolated from a Lilium henryi L. meiocyte subtractive cDNA library.</title>
        <authorList>
            <person name="Crossley J.S."/>
            <person name="Greenland A.J."/>
            <person name="Dickinson H.G."/>
        </authorList>
    </citation>
    <scope>NUCLEOTIDE SEQUENCE [MRNA]</scope>
    <scope>TISSUE SPECIFICITY</scope>
</reference>
<name>M6_LILHE</name>
<evidence type="ECO:0000269" key="1">
    <source>
    </source>
</evidence>
<evidence type="ECO:0000305" key="2"/>
<protein>
    <recommendedName>
        <fullName>Protein M6</fullName>
    </recommendedName>
    <alternativeName>
        <fullName>LhM6</fullName>
    </alternativeName>
</protein>
<comment type="subcellular location">
    <subcellularLocation>
        <location evidence="2">Secreted</location>
    </subcellularLocation>
</comment>
<comment type="tissue specificity">
    <text evidence="1">Tapetum of anthers.</text>
</comment>
<comment type="similarity">
    <text evidence="2">Belongs to the A9/FIL1 family.</text>
</comment>
<sequence length="78" mass="8405">FVLPGNNLVTPSAECCSSLSAVNTGCLCETINILSSLPANAAFHQSAAGIFDIGLYMEAKANETRWSLFSFPRVFLFE</sequence>
<feature type="chain" id="PRO_0000093789" description="Protein M6">
    <location>
        <begin position="1" status="less than"/>
        <end position="78"/>
    </location>
</feature>
<feature type="non-terminal residue">
    <location>
        <position position="1"/>
    </location>
</feature>